<sequence length="300" mass="33637">MNSGVRMVTRSRSRATRIASEGCREELAPREAAAEGRKSHRPVRHPRRTQKTHVAYEAANGEEGEDAEPLKVPVWEPQNWQQQLANIRIMRSKKDAPVDQLGAEHCYDASASPKVRRYQVLLSLMLSSQTKDQVTAGAMQRLRARGLTVESILQTDDDTLGRLIYPVGFWRNKVKYIKQTTAILQQRYEGDIPASVAELVALPGVGPKMAHLAMAVAWGTISGIAVDTHVHRIANRLRWTKKMTKTPEETRKNLEEWLPRVLWSEVNGLLVGFGQQICLPVHPRCQACLNKALCPAAQDL</sequence>
<comment type="function">
    <text evidence="3 6">Bifunctional DNA N-glycosylase with associated apurinic/apyrimidinic (AP) lyase function that catalyzes the first step in base excision repair (BER), the primary repair pathway for the repair of oxidative DNA damage. The DNA N-glycosylase activity releases the damaged DNA base from DNA by cleaving the N-glycosidic bond, leaving an AP site. The AP lyase activity cleaves the phosphodiester bond 3' to the AP site by a beta-elimination. Primarily recognizes and repairs oxidative base damage of pyrimidines.</text>
</comment>
<comment type="catalytic activity">
    <reaction evidence="1 3">
        <text>2'-deoxyribonucleotide-(2'-deoxyribose 5'-phosphate)-2'-deoxyribonucleotide-DNA = a 3'-end 2'-deoxyribonucleotide-(2,3-dehydro-2,3-deoxyribose 5'-phosphate)-DNA + a 5'-end 5'-phospho-2'-deoxyribonucleoside-DNA + H(+)</text>
        <dbReference type="Rhea" id="RHEA:66592"/>
        <dbReference type="Rhea" id="RHEA-COMP:13180"/>
        <dbReference type="Rhea" id="RHEA-COMP:16897"/>
        <dbReference type="Rhea" id="RHEA-COMP:17067"/>
        <dbReference type="ChEBI" id="CHEBI:15378"/>
        <dbReference type="ChEBI" id="CHEBI:136412"/>
        <dbReference type="ChEBI" id="CHEBI:157695"/>
        <dbReference type="ChEBI" id="CHEBI:167181"/>
        <dbReference type="EC" id="4.2.99.18"/>
    </reaction>
</comment>
<comment type="cofactor">
    <cofactor evidence="3">
        <name>[4Fe-4S] cluster</name>
        <dbReference type="ChEBI" id="CHEBI:49883"/>
    </cofactor>
    <text evidence="3">Binds 1 [4Fe-4S] cluster. The cluster does not appear to play a role in catalysis, but is probably involved in the proper positioning of the enzyme along the DNA strand.</text>
</comment>
<comment type="subunit">
    <text evidence="2 3">Interacts with YBX1 (By similarity). Interacts with ERCC5/XPG; the interaction stimulates NTHL1 activity and NTHL1 binding to its DNA substrate (By similarity).</text>
</comment>
<comment type="subcellular location">
    <subcellularLocation>
        <location evidence="3">Nucleus</location>
    </subcellularLocation>
    <subcellularLocation>
        <location evidence="3 5">Mitochondrion</location>
    </subcellularLocation>
</comment>
<comment type="tissue specificity">
    <text evidence="6">Widely expressed.</text>
</comment>
<comment type="PTM">
    <text evidence="2">Ubiquitinated by TRIM26; leading to proteasomal degradation.</text>
</comment>
<comment type="similarity">
    <text evidence="3">Belongs to the Nth/MutY family.</text>
</comment>
<comment type="sequence caution" evidence="7">
    <conflict type="frameshift">
        <sequence resource="EMBL" id="AK033701"/>
    </conflict>
</comment>
<keyword id="KW-0004">4Fe-4S</keyword>
<keyword id="KW-0227">DNA damage</keyword>
<keyword id="KW-0234">DNA repair</keyword>
<keyword id="KW-0326">Glycosidase</keyword>
<keyword id="KW-0378">Hydrolase</keyword>
<keyword id="KW-0408">Iron</keyword>
<keyword id="KW-0411">Iron-sulfur</keyword>
<keyword id="KW-0456">Lyase</keyword>
<keyword id="KW-0479">Metal-binding</keyword>
<keyword id="KW-0496">Mitochondrion</keyword>
<keyword id="KW-0539">Nucleus</keyword>
<keyword id="KW-1185">Reference proteome</keyword>
<keyword id="KW-0809">Transit peptide</keyword>
<keyword id="KW-0832">Ubl conjugation</keyword>
<organism>
    <name type="scientific">Mus musculus</name>
    <name type="common">Mouse</name>
    <dbReference type="NCBI Taxonomy" id="10090"/>
    <lineage>
        <taxon>Eukaryota</taxon>
        <taxon>Metazoa</taxon>
        <taxon>Chordata</taxon>
        <taxon>Craniata</taxon>
        <taxon>Vertebrata</taxon>
        <taxon>Euteleostomi</taxon>
        <taxon>Mammalia</taxon>
        <taxon>Eutheria</taxon>
        <taxon>Euarchontoglires</taxon>
        <taxon>Glires</taxon>
        <taxon>Rodentia</taxon>
        <taxon>Myomorpha</taxon>
        <taxon>Muroidea</taxon>
        <taxon>Muridae</taxon>
        <taxon>Murinae</taxon>
        <taxon>Mus</taxon>
        <taxon>Mus</taxon>
    </lineage>
</organism>
<proteinExistence type="evidence at transcript level"/>
<gene>
    <name type="primary">Nthl1</name>
    <name type="synonym">Nth1</name>
</gene>
<accession>O35980</accession>
<accession>E9QMW1</accession>
<name>NTH_MOUSE</name>
<protein>
    <recommendedName>
        <fullName evidence="3">Endonuclease III-like protein 1</fullName>
        <ecNumber evidence="3">3.2.2.-</ecNumber>
        <ecNumber evidence="1 3">4.2.99.18</ecNumber>
    </recommendedName>
    <alternativeName>
        <fullName evidence="3">Bifunctional DNA N-glycosylase/DNA-(apurinic or apyrimidinic site) lyase</fullName>
        <shortName evidence="3">DNA glycosylase/AP lyase</shortName>
    </alternativeName>
</protein>
<dbReference type="EC" id="3.2.2.-" evidence="3"/>
<dbReference type="EC" id="4.2.99.18" evidence="1 3"/>
<dbReference type="EMBL" id="AB006812">
    <property type="protein sequence ID" value="BAA22080.1"/>
    <property type="molecule type" value="mRNA"/>
</dbReference>
<dbReference type="EMBL" id="AB009371">
    <property type="protein sequence ID" value="BAA28846.1"/>
    <property type="molecule type" value="Genomic_DNA"/>
</dbReference>
<dbReference type="EMBL" id="AJ001617">
    <property type="protein sequence ID" value="CAB65239.1"/>
    <property type="molecule type" value="Genomic_DNA"/>
</dbReference>
<dbReference type="EMBL" id="Y09688">
    <property type="protein sequence ID" value="CAA70866.1"/>
    <property type="molecule type" value="mRNA"/>
</dbReference>
<dbReference type="EMBL" id="AK033701">
    <property type="status" value="NOT_ANNOTATED_CDS"/>
    <property type="molecule type" value="mRNA"/>
</dbReference>
<dbReference type="EMBL" id="AC132367">
    <property type="status" value="NOT_ANNOTATED_CDS"/>
    <property type="molecule type" value="Genomic_DNA"/>
</dbReference>
<dbReference type="CCDS" id="CCDS28487.1"/>
<dbReference type="RefSeq" id="NP_032769.2">
    <property type="nucleotide sequence ID" value="NM_008743.2"/>
</dbReference>
<dbReference type="SMR" id="O35980"/>
<dbReference type="FunCoup" id="O35980">
    <property type="interactions" value="2260"/>
</dbReference>
<dbReference type="STRING" id="10090.ENSMUSP00000047413"/>
<dbReference type="iPTMnet" id="O35980"/>
<dbReference type="PhosphoSitePlus" id="O35980"/>
<dbReference type="PaxDb" id="10090-ENSMUSP00000047413"/>
<dbReference type="ProteomicsDB" id="295540"/>
<dbReference type="Antibodypedia" id="23443">
    <property type="antibodies" value="267 antibodies from 29 providers"/>
</dbReference>
<dbReference type="DNASU" id="18207"/>
<dbReference type="Ensembl" id="ENSMUST00000047611.4">
    <property type="protein sequence ID" value="ENSMUSP00000047413.3"/>
    <property type="gene ID" value="ENSMUSG00000041429.4"/>
</dbReference>
<dbReference type="GeneID" id="18207"/>
<dbReference type="KEGG" id="mmu:18207"/>
<dbReference type="UCSC" id="uc008axi.2">
    <property type="organism name" value="mouse"/>
</dbReference>
<dbReference type="AGR" id="MGI:1313275"/>
<dbReference type="CTD" id="4913"/>
<dbReference type="MGI" id="MGI:1313275">
    <property type="gene designation" value="Nthl1"/>
</dbReference>
<dbReference type="VEuPathDB" id="HostDB:ENSMUSG00000041429"/>
<dbReference type="eggNOG" id="KOG1921">
    <property type="taxonomic scope" value="Eukaryota"/>
</dbReference>
<dbReference type="GeneTree" id="ENSGT00510000047513"/>
<dbReference type="HOGENOM" id="CLU_012862_4_2_1"/>
<dbReference type="InParanoid" id="O35980"/>
<dbReference type="OMA" id="WQQFTHL"/>
<dbReference type="OrthoDB" id="2099276at2759"/>
<dbReference type="PhylomeDB" id="O35980"/>
<dbReference type="TreeFam" id="TF314967"/>
<dbReference type="BRENDA" id="4.2.99.18">
    <property type="organism ID" value="3474"/>
</dbReference>
<dbReference type="Reactome" id="R-MMU-110329">
    <property type="pathway name" value="Cleavage of the damaged pyrimidine"/>
</dbReference>
<dbReference type="Reactome" id="R-MMU-110357">
    <property type="pathway name" value="Displacement of DNA glycosylase by APEX1"/>
</dbReference>
<dbReference type="BioGRID-ORCS" id="18207">
    <property type="hits" value="4 hits in 114 CRISPR screens"/>
</dbReference>
<dbReference type="ChiTaRS" id="Nthl1">
    <property type="organism name" value="mouse"/>
</dbReference>
<dbReference type="PRO" id="PR:O35980"/>
<dbReference type="Proteomes" id="UP000000589">
    <property type="component" value="Chromosome 17"/>
</dbReference>
<dbReference type="RNAct" id="O35980">
    <property type="molecule type" value="protein"/>
</dbReference>
<dbReference type="Bgee" id="ENSMUSG00000041429">
    <property type="expression patterns" value="Expressed in embryonic cell in blastocyst and 128 other cell types or tissues"/>
</dbReference>
<dbReference type="GO" id="GO:0005739">
    <property type="term" value="C:mitochondrion"/>
    <property type="evidence" value="ECO:0000314"/>
    <property type="project" value="UniProtKB"/>
</dbReference>
<dbReference type="GO" id="GO:0005634">
    <property type="term" value="C:nucleus"/>
    <property type="evidence" value="ECO:0000314"/>
    <property type="project" value="MGI"/>
</dbReference>
<dbReference type="GO" id="GO:0051539">
    <property type="term" value="F:4 iron, 4 sulfur cluster binding"/>
    <property type="evidence" value="ECO:0007669"/>
    <property type="project" value="UniProtKB-KW"/>
</dbReference>
<dbReference type="GO" id="GO:0140078">
    <property type="term" value="F:class I DNA-(apurinic or apyrimidinic site) endonuclease activity"/>
    <property type="evidence" value="ECO:0007669"/>
    <property type="project" value="UniProtKB-EC"/>
</dbReference>
<dbReference type="GO" id="GO:0003684">
    <property type="term" value="F:damaged DNA binding"/>
    <property type="evidence" value="ECO:0007669"/>
    <property type="project" value="Ensembl"/>
</dbReference>
<dbReference type="GO" id="GO:0019104">
    <property type="term" value="F:DNA N-glycosylase activity"/>
    <property type="evidence" value="ECO:0000314"/>
    <property type="project" value="UniProtKB"/>
</dbReference>
<dbReference type="GO" id="GO:0003906">
    <property type="term" value="F:DNA-(apurinic or apyrimidinic site) endonuclease activity"/>
    <property type="evidence" value="ECO:0000314"/>
    <property type="project" value="UniProtKB"/>
</dbReference>
<dbReference type="GO" id="GO:0003690">
    <property type="term" value="F:double-stranded DNA binding"/>
    <property type="evidence" value="ECO:0007669"/>
    <property type="project" value="Ensembl"/>
</dbReference>
<dbReference type="GO" id="GO:0046872">
    <property type="term" value="F:metal ion binding"/>
    <property type="evidence" value="ECO:0007669"/>
    <property type="project" value="UniProtKB-KW"/>
</dbReference>
<dbReference type="GO" id="GO:0000703">
    <property type="term" value="F:oxidized pyrimidine nucleobase lesion DNA N-glycosylase activity"/>
    <property type="evidence" value="ECO:0007669"/>
    <property type="project" value="UniProtKB-UniRule"/>
</dbReference>
<dbReference type="GO" id="GO:0006285">
    <property type="term" value="P:base-excision repair, AP site formation"/>
    <property type="evidence" value="ECO:0007669"/>
    <property type="project" value="UniProtKB-UniRule"/>
</dbReference>
<dbReference type="GO" id="GO:0006281">
    <property type="term" value="P:DNA repair"/>
    <property type="evidence" value="ECO:0000304"/>
    <property type="project" value="MGI"/>
</dbReference>
<dbReference type="GO" id="GO:0006289">
    <property type="term" value="P:nucleotide-excision repair"/>
    <property type="evidence" value="ECO:0000314"/>
    <property type="project" value="UniProtKB"/>
</dbReference>
<dbReference type="CDD" id="cd00056">
    <property type="entry name" value="ENDO3c"/>
    <property type="match status" value="1"/>
</dbReference>
<dbReference type="FunFam" id="1.10.1670.10:FF:000027">
    <property type="entry name" value="Endonuclease III homolog"/>
    <property type="match status" value="1"/>
</dbReference>
<dbReference type="FunFam" id="1.10.340.30:FF:000005">
    <property type="entry name" value="Endonuclease III-like protein 1"/>
    <property type="match status" value="1"/>
</dbReference>
<dbReference type="Gene3D" id="1.10.1670.10">
    <property type="entry name" value="Helix-hairpin-Helix base-excision DNA repair enzymes (C-terminal)"/>
    <property type="match status" value="1"/>
</dbReference>
<dbReference type="Gene3D" id="1.10.340.30">
    <property type="entry name" value="Hypothetical protein, domain 2"/>
    <property type="match status" value="1"/>
</dbReference>
<dbReference type="HAMAP" id="MF_03183">
    <property type="entry name" value="Endonuclease_III_Nth"/>
    <property type="match status" value="1"/>
</dbReference>
<dbReference type="InterPro" id="IPR011257">
    <property type="entry name" value="DNA_glycosylase"/>
</dbReference>
<dbReference type="InterPro" id="IPR004036">
    <property type="entry name" value="Endonuclease-III-like_CS2"/>
</dbReference>
<dbReference type="InterPro" id="IPR003651">
    <property type="entry name" value="Endonuclease3_FeS-loop_motif"/>
</dbReference>
<dbReference type="InterPro" id="IPR003265">
    <property type="entry name" value="HhH-GPD_domain"/>
</dbReference>
<dbReference type="InterPro" id="IPR023170">
    <property type="entry name" value="HhH_base_excis_C"/>
</dbReference>
<dbReference type="InterPro" id="IPR000445">
    <property type="entry name" value="HhH_motif"/>
</dbReference>
<dbReference type="InterPro" id="IPR030841">
    <property type="entry name" value="NTH1"/>
</dbReference>
<dbReference type="PANTHER" id="PTHR43286">
    <property type="entry name" value="ENDONUCLEASE III-LIKE PROTEIN 1"/>
    <property type="match status" value="1"/>
</dbReference>
<dbReference type="PANTHER" id="PTHR43286:SF1">
    <property type="entry name" value="ENDONUCLEASE III-LIKE PROTEIN 1"/>
    <property type="match status" value="1"/>
</dbReference>
<dbReference type="Pfam" id="PF00633">
    <property type="entry name" value="HHH"/>
    <property type="match status" value="1"/>
</dbReference>
<dbReference type="Pfam" id="PF00730">
    <property type="entry name" value="HhH-GPD"/>
    <property type="match status" value="1"/>
</dbReference>
<dbReference type="SMART" id="SM00478">
    <property type="entry name" value="ENDO3c"/>
    <property type="match status" value="1"/>
</dbReference>
<dbReference type="SMART" id="SM00525">
    <property type="entry name" value="FES"/>
    <property type="match status" value="1"/>
</dbReference>
<dbReference type="SUPFAM" id="SSF48150">
    <property type="entry name" value="DNA-glycosylase"/>
    <property type="match status" value="1"/>
</dbReference>
<dbReference type="PROSITE" id="PS01155">
    <property type="entry name" value="ENDONUCLEASE_III_2"/>
    <property type="match status" value="1"/>
</dbReference>
<feature type="transit peptide" description="Mitochondrion" evidence="3">
    <location>
        <begin position="1"/>
        <end position="19"/>
    </location>
</feature>
<feature type="chain" id="PRO_0000102228" description="Endonuclease III-like protein 1">
    <location>
        <begin position="20"/>
        <end position="300"/>
    </location>
</feature>
<feature type="domain" description="HhH" evidence="3">
    <location>
        <begin position="187"/>
        <end position="211"/>
    </location>
</feature>
<feature type="region of interest" description="Disordered" evidence="4">
    <location>
        <begin position="1"/>
        <end position="53"/>
    </location>
</feature>
<feature type="compositionally biased region" description="Basic and acidic residues" evidence="4">
    <location>
        <begin position="22"/>
        <end position="37"/>
    </location>
</feature>
<feature type="compositionally biased region" description="Basic residues" evidence="4">
    <location>
        <begin position="38"/>
        <end position="51"/>
    </location>
</feature>
<feature type="active site" description="Nucleophile; for N-glycosylase activity" evidence="3">
    <location>
        <position position="208"/>
    </location>
</feature>
<feature type="binding site" evidence="3">
    <location>
        <position position="278"/>
    </location>
    <ligand>
        <name>[4Fe-4S] cluster</name>
        <dbReference type="ChEBI" id="CHEBI:49883"/>
    </ligand>
</feature>
<feature type="binding site" evidence="3">
    <location>
        <position position="285"/>
    </location>
    <ligand>
        <name>[4Fe-4S] cluster</name>
        <dbReference type="ChEBI" id="CHEBI:49883"/>
    </ligand>
</feature>
<feature type="binding site" evidence="3">
    <location>
        <position position="288"/>
    </location>
    <ligand>
        <name>[4Fe-4S] cluster</name>
        <dbReference type="ChEBI" id="CHEBI:49883"/>
    </ligand>
</feature>
<feature type="binding site" evidence="3">
    <location>
        <position position="294"/>
    </location>
    <ligand>
        <name>[4Fe-4S] cluster</name>
        <dbReference type="ChEBI" id="CHEBI:49883"/>
    </ligand>
</feature>
<feature type="site" description="Important for catalytic activity" evidence="3">
    <location>
        <position position="227"/>
    </location>
</feature>
<evidence type="ECO:0000250" key="1">
    <source>
        <dbReference type="UniProtKB" id="P20625"/>
    </source>
</evidence>
<evidence type="ECO:0000250" key="2">
    <source>
        <dbReference type="UniProtKB" id="P78549"/>
    </source>
</evidence>
<evidence type="ECO:0000255" key="3">
    <source>
        <dbReference type="HAMAP-Rule" id="MF_03183"/>
    </source>
</evidence>
<evidence type="ECO:0000256" key="4">
    <source>
        <dbReference type="SAM" id="MobiDB-lite"/>
    </source>
</evidence>
<evidence type="ECO:0000269" key="5">
    <source>
    </source>
</evidence>
<evidence type="ECO:0000269" key="6">
    <source>
    </source>
</evidence>
<evidence type="ECO:0000305" key="7"/>
<reference evidence="7" key="1">
    <citation type="journal article" date="1998" name="J. Mol. Biol.">
        <title>Cloning and characterization of a mouse homologue (mNthl1) of Escherichia coli endonuclease III.</title>
        <authorList>
            <person name="Sarker A.H."/>
            <person name="Ikeda S."/>
            <person name="Nakano H."/>
            <person name="Terato H."/>
            <person name="Ide H."/>
            <person name="Imai K."/>
            <person name="Akiyama K."/>
            <person name="Tsutsui K."/>
            <person name="Bo Z."/>
            <person name="Kubo K."/>
            <person name="Yamamoto K."/>
            <person name="Yasui A."/>
            <person name="Yoshida M.C."/>
            <person name="Seki S."/>
        </authorList>
    </citation>
    <scope>NUCLEOTIDE SEQUENCE [GENOMIC DNA / MRNA]</scope>
    <scope>FUNCTION</scope>
    <scope>TISSUE SPECIFICITY</scope>
    <source>
        <strain>BALB/cJ</strain>
        <tissue>Leukocyte</tissue>
        <tissue>T-cell</tissue>
    </source>
</reference>
<reference key="2">
    <citation type="submission" date="1997-09" db="EMBL/GenBank/DDBJ databases">
        <title>Complete genomic DNA sequence of the Mus musculus endonuclease III homologue 1 gene (NTH1).</title>
        <authorList>
            <person name="Luna L."/>
            <person name="Bjoras M."/>
            <person name="Rognes T."/>
            <person name="Hoff E."/>
            <person name="Seeberg E."/>
        </authorList>
    </citation>
    <scope>NUCLEOTIDE SEQUENCE [GENOMIC DNA / MRNA]</scope>
    <source>
        <tissue>Embryonic stem cell</tissue>
        <tissue>Lung</tissue>
    </source>
</reference>
<reference key="3">
    <citation type="journal article" date="2005" name="Science">
        <title>The transcriptional landscape of the mammalian genome.</title>
        <authorList>
            <person name="Carninci P."/>
            <person name="Kasukawa T."/>
            <person name="Katayama S."/>
            <person name="Gough J."/>
            <person name="Frith M.C."/>
            <person name="Maeda N."/>
            <person name="Oyama R."/>
            <person name="Ravasi T."/>
            <person name="Lenhard B."/>
            <person name="Wells C."/>
            <person name="Kodzius R."/>
            <person name="Shimokawa K."/>
            <person name="Bajic V.B."/>
            <person name="Brenner S.E."/>
            <person name="Batalov S."/>
            <person name="Forrest A.R."/>
            <person name="Zavolan M."/>
            <person name="Davis M.J."/>
            <person name="Wilming L.G."/>
            <person name="Aidinis V."/>
            <person name="Allen J.E."/>
            <person name="Ambesi-Impiombato A."/>
            <person name="Apweiler R."/>
            <person name="Aturaliya R.N."/>
            <person name="Bailey T.L."/>
            <person name="Bansal M."/>
            <person name="Baxter L."/>
            <person name="Beisel K.W."/>
            <person name="Bersano T."/>
            <person name="Bono H."/>
            <person name="Chalk A.M."/>
            <person name="Chiu K.P."/>
            <person name="Choudhary V."/>
            <person name="Christoffels A."/>
            <person name="Clutterbuck D.R."/>
            <person name="Crowe M.L."/>
            <person name="Dalla E."/>
            <person name="Dalrymple B.P."/>
            <person name="de Bono B."/>
            <person name="Della Gatta G."/>
            <person name="di Bernardo D."/>
            <person name="Down T."/>
            <person name="Engstrom P."/>
            <person name="Fagiolini M."/>
            <person name="Faulkner G."/>
            <person name="Fletcher C.F."/>
            <person name="Fukushima T."/>
            <person name="Furuno M."/>
            <person name="Futaki S."/>
            <person name="Gariboldi M."/>
            <person name="Georgii-Hemming P."/>
            <person name="Gingeras T.R."/>
            <person name="Gojobori T."/>
            <person name="Green R.E."/>
            <person name="Gustincich S."/>
            <person name="Harbers M."/>
            <person name="Hayashi Y."/>
            <person name="Hensch T.K."/>
            <person name="Hirokawa N."/>
            <person name="Hill D."/>
            <person name="Huminiecki L."/>
            <person name="Iacono M."/>
            <person name="Ikeo K."/>
            <person name="Iwama A."/>
            <person name="Ishikawa T."/>
            <person name="Jakt M."/>
            <person name="Kanapin A."/>
            <person name="Katoh M."/>
            <person name="Kawasawa Y."/>
            <person name="Kelso J."/>
            <person name="Kitamura H."/>
            <person name="Kitano H."/>
            <person name="Kollias G."/>
            <person name="Krishnan S.P."/>
            <person name="Kruger A."/>
            <person name="Kummerfeld S.K."/>
            <person name="Kurochkin I.V."/>
            <person name="Lareau L.F."/>
            <person name="Lazarevic D."/>
            <person name="Lipovich L."/>
            <person name="Liu J."/>
            <person name="Liuni S."/>
            <person name="McWilliam S."/>
            <person name="Madan Babu M."/>
            <person name="Madera M."/>
            <person name="Marchionni L."/>
            <person name="Matsuda H."/>
            <person name="Matsuzawa S."/>
            <person name="Miki H."/>
            <person name="Mignone F."/>
            <person name="Miyake S."/>
            <person name="Morris K."/>
            <person name="Mottagui-Tabar S."/>
            <person name="Mulder N."/>
            <person name="Nakano N."/>
            <person name="Nakauchi H."/>
            <person name="Ng P."/>
            <person name="Nilsson R."/>
            <person name="Nishiguchi S."/>
            <person name="Nishikawa S."/>
            <person name="Nori F."/>
            <person name="Ohara O."/>
            <person name="Okazaki Y."/>
            <person name="Orlando V."/>
            <person name="Pang K.C."/>
            <person name="Pavan W.J."/>
            <person name="Pavesi G."/>
            <person name="Pesole G."/>
            <person name="Petrovsky N."/>
            <person name="Piazza S."/>
            <person name="Reed J."/>
            <person name="Reid J.F."/>
            <person name="Ring B.Z."/>
            <person name="Ringwald M."/>
            <person name="Rost B."/>
            <person name="Ruan Y."/>
            <person name="Salzberg S.L."/>
            <person name="Sandelin A."/>
            <person name="Schneider C."/>
            <person name="Schoenbach C."/>
            <person name="Sekiguchi K."/>
            <person name="Semple C.A."/>
            <person name="Seno S."/>
            <person name="Sessa L."/>
            <person name="Sheng Y."/>
            <person name="Shibata Y."/>
            <person name="Shimada H."/>
            <person name="Shimada K."/>
            <person name="Silva D."/>
            <person name="Sinclair B."/>
            <person name="Sperling S."/>
            <person name="Stupka E."/>
            <person name="Sugiura K."/>
            <person name="Sultana R."/>
            <person name="Takenaka Y."/>
            <person name="Taki K."/>
            <person name="Tammoja K."/>
            <person name="Tan S.L."/>
            <person name="Tang S."/>
            <person name="Taylor M.S."/>
            <person name="Tegner J."/>
            <person name="Teichmann S.A."/>
            <person name="Ueda H.R."/>
            <person name="van Nimwegen E."/>
            <person name="Verardo R."/>
            <person name="Wei C.L."/>
            <person name="Yagi K."/>
            <person name="Yamanishi H."/>
            <person name="Zabarovsky E."/>
            <person name="Zhu S."/>
            <person name="Zimmer A."/>
            <person name="Hide W."/>
            <person name="Bult C."/>
            <person name="Grimmond S.M."/>
            <person name="Teasdale R.D."/>
            <person name="Liu E.T."/>
            <person name="Brusic V."/>
            <person name="Quackenbush J."/>
            <person name="Wahlestedt C."/>
            <person name="Mattick J.S."/>
            <person name="Hume D.A."/>
            <person name="Kai C."/>
            <person name="Sasaki D."/>
            <person name="Tomaru Y."/>
            <person name="Fukuda S."/>
            <person name="Kanamori-Katayama M."/>
            <person name="Suzuki M."/>
            <person name="Aoki J."/>
            <person name="Arakawa T."/>
            <person name="Iida J."/>
            <person name="Imamura K."/>
            <person name="Itoh M."/>
            <person name="Kato T."/>
            <person name="Kawaji H."/>
            <person name="Kawagashira N."/>
            <person name="Kawashima T."/>
            <person name="Kojima M."/>
            <person name="Kondo S."/>
            <person name="Konno H."/>
            <person name="Nakano K."/>
            <person name="Ninomiya N."/>
            <person name="Nishio T."/>
            <person name="Okada M."/>
            <person name="Plessy C."/>
            <person name="Shibata K."/>
            <person name="Shiraki T."/>
            <person name="Suzuki S."/>
            <person name="Tagami M."/>
            <person name="Waki K."/>
            <person name="Watahiki A."/>
            <person name="Okamura-Oho Y."/>
            <person name="Suzuki H."/>
            <person name="Kawai J."/>
            <person name="Hayashizaki Y."/>
        </authorList>
    </citation>
    <scope>NUCLEOTIDE SEQUENCE [LARGE SCALE MRNA]</scope>
    <source>
        <strain>C57BL/6J</strain>
        <tissue>Cecum</tissue>
    </source>
</reference>
<reference key="4">
    <citation type="journal article" date="2009" name="PLoS Biol.">
        <title>Lineage-specific biology revealed by a finished genome assembly of the mouse.</title>
        <authorList>
            <person name="Church D.M."/>
            <person name="Goodstadt L."/>
            <person name="Hillier L.W."/>
            <person name="Zody M.C."/>
            <person name="Goldstein S."/>
            <person name="She X."/>
            <person name="Bult C.J."/>
            <person name="Agarwala R."/>
            <person name="Cherry J.L."/>
            <person name="DiCuccio M."/>
            <person name="Hlavina W."/>
            <person name="Kapustin Y."/>
            <person name="Meric P."/>
            <person name="Maglott D."/>
            <person name="Birtle Z."/>
            <person name="Marques A.C."/>
            <person name="Graves T."/>
            <person name="Zhou S."/>
            <person name="Teague B."/>
            <person name="Potamousis K."/>
            <person name="Churas C."/>
            <person name="Place M."/>
            <person name="Herschleb J."/>
            <person name="Runnheim R."/>
            <person name="Forrest D."/>
            <person name="Amos-Landgraf J."/>
            <person name="Schwartz D.C."/>
            <person name="Cheng Z."/>
            <person name="Lindblad-Toh K."/>
            <person name="Eichler E.E."/>
            <person name="Ponting C.P."/>
        </authorList>
    </citation>
    <scope>NUCLEOTIDE SEQUENCE [LARGE SCALE GENOMIC DNA]</scope>
    <source>
        <strain>C57BL/6J</strain>
    </source>
</reference>
<reference evidence="7" key="5">
    <citation type="journal article" date="2002" name="DNA Repair">
        <title>Differential intracellular localization of the human and mouse endonuclease III homologs and analysis of the sorting signals.</title>
        <authorList>
            <person name="Ikeda S."/>
            <person name="Kohmoto T."/>
            <person name="Tabata R."/>
            <person name="Seki Y."/>
        </authorList>
    </citation>
    <scope>SUBCELLULAR LOCATION</scope>
</reference>